<name>RK23_SACHY</name>
<gene>
    <name type="primary">rpl23-A</name>
    <name type="ordered locus">PS010</name>
</gene>
<gene>
    <name type="primary">rpl23-B</name>
    <name type="ordered locus">PS076</name>
</gene>
<proteinExistence type="inferred from homology"/>
<dbReference type="EMBL" id="AE009947">
    <property type="protein sequence ID" value="AAT44638.1"/>
    <property type="molecule type" value="Genomic_DNA"/>
</dbReference>
<dbReference type="EMBL" id="AE009947">
    <property type="protein sequence ID" value="AAT44672.1"/>
    <property type="molecule type" value="Genomic_DNA"/>
</dbReference>
<dbReference type="SMR" id="Q6L3C0"/>
<dbReference type="GO" id="GO:0009507">
    <property type="term" value="C:chloroplast"/>
    <property type="evidence" value="ECO:0007669"/>
    <property type="project" value="UniProtKB-SubCell"/>
</dbReference>
<dbReference type="GO" id="GO:1990904">
    <property type="term" value="C:ribonucleoprotein complex"/>
    <property type="evidence" value="ECO:0007669"/>
    <property type="project" value="UniProtKB-KW"/>
</dbReference>
<dbReference type="GO" id="GO:0005840">
    <property type="term" value="C:ribosome"/>
    <property type="evidence" value="ECO:0007669"/>
    <property type="project" value="UniProtKB-KW"/>
</dbReference>
<dbReference type="GO" id="GO:0019843">
    <property type="term" value="F:rRNA binding"/>
    <property type="evidence" value="ECO:0007669"/>
    <property type="project" value="UniProtKB-UniRule"/>
</dbReference>
<dbReference type="GO" id="GO:0003735">
    <property type="term" value="F:structural constituent of ribosome"/>
    <property type="evidence" value="ECO:0007669"/>
    <property type="project" value="InterPro"/>
</dbReference>
<dbReference type="GO" id="GO:0006412">
    <property type="term" value="P:translation"/>
    <property type="evidence" value="ECO:0007669"/>
    <property type="project" value="UniProtKB-UniRule"/>
</dbReference>
<dbReference type="FunFam" id="3.30.70.330:FF:000002">
    <property type="entry name" value="50S ribosomal protein L23, chloroplastic"/>
    <property type="match status" value="1"/>
</dbReference>
<dbReference type="Gene3D" id="3.30.70.330">
    <property type="match status" value="1"/>
</dbReference>
<dbReference type="HAMAP" id="MF_01369_B">
    <property type="entry name" value="Ribosomal_uL23_B"/>
    <property type="match status" value="1"/>
</dbReference>
<dbReference type="InterPro" id="IPR012677">
    <property type="entry name" value="Nucleotide-bd_a/b_plait_sf"/>
</dbReference>
<dbReference type="InterPro" id="IPR013025">
    <property type="entry name" value="Ribosomal_uL23-like"/>
</dbReference>
<dbReference type="InterPro" id="IPR012678">
    <property type="entry name" value="Ribosomal_uL23/eL15/eS24_sf"/>
</dbReference>
<dbReference type="InterPro" id="IPR001014">
    <property type="entry name" value="Ribosomal_uL23_CS"/>
</dbReference>
<dbReference type="PANTHER" id="PTHR11620">
    <property type="entry name" value="60S RIBOSOMAL PROTEIN L23A"/>
    <property type="match status" value="1"/>
</dbReference>
<dbReference type="Pfam" id="PF00276">
    <property type="entry name" value="Ribosomal_L23"/>
    <property type="match status" value="1"/>
</dbReference>
<dbReference type="SUPFAM" id="SSF54189">
    <property type="entry name" value="Ribosomal proteins S24e, L23 and L15e"/>
    <property type="match status" value="1"/>
</dbReference>
<dbReference type="PROSITE" id="PS00050">
    <property type="entry name" value="RIBOSOMAL_L23"/>
    <property type="match status" value="1"/>
</dbReference>
<sequence>MDGIKYAVFTEKSLRLLGKNQYTFNVESGFTKTEIKHWVELFFGVKVVAVNSHRLPGKGRRMGPILGHTMHYRRMIITLQPGYSIPLLDRETN</sequence>
<keyword id="KW-0150">Chloroplast</keyword>
<keyword id="KW-0934">Plastid</keyword>
<keyword id="KW-0687">Ribonucleoprotein</keyword>
<keyword id="KW-0689">Ribosomal protein</keyword>
<keyword id="KW-0694">RNA-binding</keyword>
<keyword id="KW-0699">rRNA-binding</keyword>
<evidence type="ECO:0000250" key="1"/>
<evidence type="ECO:0000305" key="2"/>
<feature type="chain" id="PRO_0000226930" description="Large ribosomal subunit protein uL23cz/uL23cy">
    <location>
        <begin position="1"/>
        <end position="93"/>
    </location>
</feature>
<protein>
    <recommendedName>
        <fullName evidence="2">Large ribosomal subunit protein uL23cz/uL23cy</fullName>
    </recommendedName>
    <alternativeName>
        <fullName>50S ribosomal protein L23, chloroplastic</fullName>
    </alternativeName>
</protein>
<geneLocation type="chloroplast"/>
<organism>
    <name type="scientific">Saccharum hybrid</name>
    <name type="common">Sugarcane</name>
    <dbReference type="NCBI Taxonomy" id="15819"/>
    <lineage>
        <taxon>Eukaryota</taxon>
        <taxon>Viridiplantae</taxon>
        <taxon>Streptophyta</taxon>
        <taxon>Embryophyta</taxon>
        <taxon>Tracheophyta</taxon>
        <taxon>Spermatophyta</taxon>
        <taxon>Magnoliopsida</taxon>
        <taxon>Liliopsida</taxon>
        <taxon>Poales</taxon>
        <taxon>Poaceae</taxon>
        <taxon>PACMAD clade</taxon>
        <taxon>Panicoideae</taxon>
        <taxon>Andropogonodae</taxon>
        <taxon>Andropogoneae</taxon>
        <taxon>Saccharinae</taxon>
        <taxon>Saccharum</taxon>
    </lineage>
</organism>
<accession>Q6L3C0</accession>
<comment type="function">
    <text evidence="1">Binds to 23S rRNA.</text>
</comment>
<comment type="subunit">
    <text evidence="1">Part of the 50S ribosomal subunit.</text>
</comment>
<comment type="subcellular location">
    <subcellularLocation>
        <location>Plastid</location>
        <location>Chloroplast</location>
    </subcellularLocation>
</comment>
<comment type="similarity">
    <text evidence="2">Belongs to the universal ribosomal protein uL23 family.</text>
</comment>
<reference key="1">
    <citation type="journal article" date="2004" name="Curr. Genet.">
        <title>Structural features and transcript-editing analysis of sugarcane (Saccharum officinarum L.) chloroplast genome.</title>
        <authorList>
            <person name="Calsa T. Jr."/>
            <person name="Carraro D.M."/>
            <person name="Benatti M.R."/>
            <person name="Barbosa A.C."/>
            <person name="Kitajima J.P."/>
            <person name="Carrer H."/>
        </authorList>
    </citation>
    <scope>NUCLEOTIDE SEQUENCE [LARGE SCALE GENOMIC DNA]</scope>
    <source>
        <strain>cv. SP-80-3280</strain>
    </source>
</reference>